<keyword id="KW-0997">Cell inner membrane</keyword>
<keyword id="KW-1003">Cell membrane</keyword>
<keyword id="KW-0407">Ion channel</keyword>
<keyword id="KW-0406">Ion transport</keyword>
<keyword id="KW-0472">Membrane</keyword>
<keyword id="KW-0812">Transmembrane</keyword>
<keyword id="KW-1133">Transmembrane helix</keyword>
<keyword id="KW-0813">Transport</keyword>
<feature type="chain" id="PRO_1000202977" description="Large-conductance mechanosensitive channel">
    <location>
        <begin position="1"/>
        <end position="137"/>
    </location>
</feature>
<feature type="transmembrane region" description="Helical" evidence="1">
    <location>
        <begin position="10"/>
        <end position="30"/>
    </location>
</feature>
<feature type="transmembrane region" description="Helical" evidence="1">
    <location>
        <begin position="76"/>
        <end position="96"/>
    </location>
</feature>
<name>MSCL_PECCP</name>
<sequence length="137" mass="15146">MSIIKEFREFAMRGNVVDLAVGVIIGAAFGKIVSSLVSDIIMPPLGLLIGGVDFKQFSLILRDAQGEVPAVVMNYGAFIQNIFDFVIVAFAIFMAIKLMNKLRRKQEDEPAAPPKPSAEEKLLAEIRDLLKEQQPKQ</sequence>
<dbReference type="EMBL" id="CP001657">
    <property type="protein sequence ID" value="ACT14808.1"/>
    <property type="molecule type" value="Genomic_DNA"/>
</dbReference>
<dbReference type="RefSeq" id="WP_015841919.1">
    <property type="nucleotide sequence ID" value="NC_012917.1"/>
</dbReference>
<dbReference type="SMR" id="C6DFR9"/>
<dbReference type="STRING" id="561230.PC1_3793"/>
<dbReference type="GeneID" id="67792310"/>
<dbReference type="KEGG" id="pct:PC1_3793"/>
<dbReference type="eggNOG" id="COG1970">
    <property type="taxonomic scope" value="Bacteria"/>
</dbReference>
<dbReference type="HOGENOM" id="CLU_095787_0_0_6"/>
<dbReference type="OrthoDB" id="9810350at2"/>
<dbReference type="Proteomes" id="UP000002736">
    <property type="component" value="Chromosome"/>
</dbReference>
<dbReference type="GO" id="GO:0005886">
    <property type="term" value="C:plasma membrane"/>
    <property type="evidence" value="ECO:0007669"/>
    <property type="project" value="UniProtKB-SubCell"/>
</dbReference>
<dbReference type="GO" id="GO:0008381">
    <property type="term" value="F:mechanosensitive monoatomic ion channel activity"/>
    <property type="evidence" value="ECO:0007669"/>
    <property type="project" value="UniProtKB-UniRule"/>
</dbReference>
<dbReference type="FunFam" id="1.10.1200.120:FF:000001">
    <property type="entry name" value="Large-conductance mechanosensitive channel"/>
    <property type="match status" value="1"/>
</dbReference>
<dbReference type="Gene3D" id="1.10.1200.120">
    <property type="entry name" value="Large-conductance mechanosensitive channel, MscL, domain 1"/>
    <property type="match status" value="1"/>
</dbReference>
<dbReference type="HAMAP" id="MF_00115">
    <property type="entry name" value="MscL"/>
    <property type="match status" value="1"/>
</dbReference>
<dbReference type="InterPro" id="IPR019823">
    <property type="entry name" value="Mechanosensitive_channel_CS"/>
</dbReference>
<dbReference type="InterPro" id="IPR001185">
    <property type="entry name" value="MS_channel"/>
</dbReference>
<dbReference type="InterPro" id="IPR037673">
    <property type="entry name" value="MSC/AndL"/>
</dbReference>
<dbReference type="InterPro" id="IPR036019">
    <property type="entry name" value="MscL_channel"/>
</dbReference>
<dbReference type="NCBIfam" id="TIGR00220">
    <property type="entry name" value="mscL"/>
    <property type="match status" value="1"/>
</dbReference>
<dbReference type="NCBIfam" id="NF001841">
    <property type="entry name" value="PRK00567.1-1"/>
    <property type="match status" value="1"/>
</dbReference>
<dbReference type="NCBIfam" id="NF001843">
    <property type="entry name" value="PRK00567.1-4"/>
    <property type="match status" value="1"/>
</dbReference>
<dbReference type="PANTHER" id="PTHR30266:SF2">
    <property type="entry name" value="LARGE-CONDUCTANCE MECHANOSENSITIVE CHANNEL"/>
    <property type="match status" value="1"/>
</dbReference>
<dbReference type="PANTHER" id="PTHR30266">
    <property type="entry name" value="MECHANOSENSITIVE CHANNEL MSCL"/>
    <property type="match status" value="1"/>
</dbReference>
<dbReference type="Pfam" id="PF01741">
    <property type="entry name" value="MscL"/>
    <property type="match status" value="1"/>
</dbReference>
<dbReference type="PRINTS" id="PR01264">
    <property type="entry name" value="MECHCHANNEL"/>
</dbReference>
<dbReference type="SUPFAM" id="SSF81330">
    <property type="entry name" value="Gated mechanosensitive channel"/>
    <property type="match status" value="1"/>
</dbReference>
<dbReference type="PROSITE" id="PS01327">
    <property type="entry name" value="MSCL"/>
    <property type="match status" value="1"/>
</dbReference>
<accession>C6DFR9</accession>
<protein>
    <recommendedName>
        <fullName evidence="1">Large-conductance mechanosensitive channel</fullName>
    </recommendedName>
</protein>
<gene>
    <name evidence="1" type="primary">mscL</name>
    <name type="ordered locus">PC1_3793</name>
</gene>
<proteinExistence type="inferred from homology"/>
<reference key="1">
    <citation type="submission" date="2009-07" db="EMBL/GenBank/DDBJ databases">
        <title>Complete sequence of Pectobacterium carotovorum subsp. carotovorum PC1.</title>
        <authorList>
            <consortium name="US DOE Joint Genome Institute"/>
            <person name="Lucas S."/>
            <person name="Copeland A."/>
            <person name="Lapidus A."/>
            <person name="Glavina del Rio T."/>
            <person name="Tice H."/>
            <person name="Bruce D."/>
            <person name="Goodwin L."/>
            <person name="Pitluck S."/>
            <person name="Munk A.C."/>
            <person name="Brettin T."/>
            <person name="Detter J.C."/>
            <person name="Han C."/>
            <person name="Tapia R."/>
            <person name="Larimer F."/>
            <person name="Land M."/>
            <person name="Hauser L."/>
            <person name="Kyrpides N."/>
            <person name="Mikhailova N."/>
            <person name="Balakrishnan V."/>
            <person name="Glasner J."/>
            <person name="Perna N.T."/>
        </authorList>
    </citation>
    <scope>NUCLEOTIDE SEQUENCE [LARGE SCALE GENOMIC DNA]</scope>
    <source>
        <strain>PC1</strain>
    </source>
</reference>
<evidence type="ECO:0000255" key="1">
    <source>
        <dbReference type="HAMAP-Rule" id="MF_00115"/>
    </source>
</evidence>
<comment type="function">
    <text evidence="1">Channel that opens in response to stretch forces in the membrane lipid bilayer. May participate in the regulation of osmotic pressure changes within the cell.</text>
</comment>
<comment type="subunit">
    <text evidence="1">Homopentamer.</text>
</comment>
<comment type="subcellular location">
    <subcellularLocation>
        <location evidence="1">Cell inner membrane</location>
        <topology evidence="1">Multi-pass membrane protein</topology>
    </subcellularLocation>
</comment>
<comment type="similarity">
    <text evidence="1">Belongs to the MscL family.</text>
</comment>
<organism>
    <name type="scientific">Pectobacterium carotovorum subsp. carotovorum (strain PC1)</name>
    <dbReference type="NCBI Taxonomy" id="561230"/>
    <lineage>
        <taxon>Bacteria</taxon>
        <taxon>Pseudomonadati</taxon>
        <taxon>Pseudomonadota</taxon>
        <taxon>Gammaproteobacteria</taxon>
        <taxon>Enterobacterales</taxon>
        <taxon>Pectobacteriaceae</taxon>
        <taxon>Pectobacterium</taxon>
    </lineage>
</organism>